<gene>
    <name type="ORF">SPAC5H10.09c</name>
</gene>
<name>PANB_SCHPO</name>
<evidence type="ECO:0000305" key="1"/>
<sequence>MSLKQITISTLRQWKLANKKFACITAYDASFSRLFAEQGMPVMLVGDSLGMTAQGHSTTLPVSVEDIAYHTKSVRRGAPNRLLMADLPFMSYSTWEDACKNAATVMRAGANIVKIEGGGNWIFEIVQRLTERSVPVAGHLGLTPQSVNIFGGYKIQGREQSAAARLIENAQQLEKFGAQLLVLECIPESLAEQITKTISIPTIGIGAGKHTDGQILVMHDALGITGGRPPKFAKNFLSGAGDIRTAIQRYIYEVEQGLYPAEEHSFQ</sequence>
<proteinExistence type="inferred from homology"/>
<protein>
    <recommendedName>
        <fullName>Probable 3-methyl-2-oxobutanoate hydroxymethyltransferase</fullName>
        <ecNumber>2.1.2.11</ecNumber>
    </recommendedName>
    <alternativeName>
        <fullName>Ketopantoate hydroxymethyltransferase</fullName>
    </alternativeName>
</protein>
<dbReference type="EC" id="2.1.2.11"/>
<dbReference type="EMBL" id="CU329670">
    <property type="protein sequence ID" value="CAA89959.1"/>
    <property type="molecule type" value="Genomic_DNA"/>
</dbReference>
<dbReference type="PIR" id="S55487">
    <property type="entry name" value="S55487"/>
</dbReference>
<dbReference type="SMR" id="Q09672"/>
<dbReference type="BioGRID" id="279181">
    <property type="interactions" value="19"/>
</dbReference>
<dbReference type="FunCoup" id="Q09672">
    <property type="interactions" value="469"/>
</dbReference>
<dbReference type="STRING" id="284812.Q09672"/>
<dbReference type="PaxDb" id="4896-SPAC5H10.09c.1"/>
<dbReference type="EnsemblFungi" id="SPAC5H10.09c.1">
    <property type="protein sequence ID" value="SPAC5H10.09c.1:pep"/>
    <property type="gene ID" value="SPAC5H10.09c"/>
</dbReference>
<dbReference type="KEGG" id="spo:2542731"/>
<dbReference type="PomBase" id="SPAC5H10.09c"/>
<dbReference type="VEuPathDB" id="FungiDB:SPAC5H10.09c"/>
<dbReference type="eggNOG" id="KOG2949">
    <property type="taxonomic scope" value="Eukaryota"/>
</dbReference>
<dbReference type="HOGENOM" id="CLU_036645_1_0_1"/>
<dbReference type="InParanoid" id="Q09672"/>
<dbReference type="OMA" id="VLVWTDM"/>
<dbReference type="PhylomeDB" id="Q09672"/>
<dbReference type="UniPathway" id="UPA00028">
    <property type="reaction ID" value="UER00003"/>
</dbReference>
<dbReference type="PRO" id="PR:Q09672"/>
<dbReference type="Proteomes" id="UP000002485">
    <property type="component" value="Chromosome I"/>
</dbReference>
<dbReference type="GO" id="GO:0005737">
    <property type="term" value="C:cytoplasm"/>
    <property type="evidence" value="ECO:0000318"/>
    <property type="project" value="GO_Central"/>
</dbReference>
<dbReference type="GO" id="GO:0005739">
    <property type="term" value="C:mitochondrion"/>
    <property type="evidence" value="ECO:0007005"/>
    <property type="project" value="PomBase"/>
</dbReference>
<dbReference type="GO" id="GO:0003864">
    <property type="term" value="F:3-methyl-2-oxobutanoate hydroxymethyltransferase activity"/>
    <property type="evidence" value="ECO:0000318"/>
    <property type="project" value="GO_Central"/>
</dbReference>
<dbReference type="GO" id="GO:0000287">
    <property type="term" value="F:magnesium ion binding"/>
    <property type="evidence" value="ECO:0000318"/>
    <property type="project" value="GO_Central"/>
</dbReference>
<dbReference type="GO" id="GO:0015940">
    <property type="term" value="P:pantothenate biosynthetic process"/>
    <property type="evidence" value="ECO:0000318"/>
    <property type="project" value="GO_Central"/>
</dbReference>
<dbReference type="CDD" id="cd06557">
    <property type="entry name" value="KPHMT-like"/>
    <property type="match status" value="1"/>
</dbReference>
<dbReference type="FunFam" id="3.20.20.60:FF:000003">
    <property type="entry name" value="3-methyl-2-oxobutanoate hydroxymethyltransferase"/>
    <property type="match status" value="1"/>
</dbReference>
<dbReference type="Gene3D" id="3.20.20.60">
    <property type="entry name" value="Phosphoenolpyruvate-binding domains"/>
    <property type="match status" value="1"/>
</dbReference>
<dbReference type="HAMAP" id="MF_00156">
    <property type="entry name" value="PanB"/>
    <property type="match status" value="1"/>
</dbReference>
<dbReference type="InterPro" id="IPR003700">
    <property type="entry name" value="Pantoate_hydroxy_MeTrfase"/>
</dbReference>
<dbReference type="InterPro" id="IPR015813">
    <property type="entry name" value="Pyrv/PenolPyrv_kinase-like_dom"/>
</dbReference>
<dbReference type="InterPro" id="IPR040442">
    <property type="entry name" value="Pyrv_kinase-like_dom_sf"/>
</dbReference>
<dbReference type="NCBIfam" id="TIGR00222">
    <property type="entry name" value="panB"/>
    <property type="match status" value="1"/>
</dbReference>
<dbReference type="NCBIfam" id="NF001452">
    <property type="entry name" value="PRK00311.1"/>
    <property type="match status" value="1"/>
</dbReference>
<dbReference type="PANTHER" id="PTHR20881">
    <property type="entry name" value="3-METHYL-2-OXOBUTANOATE HYDROXYMETHYLTRANSFERASE"/>
    <property type="match status" value="1"/>
</dbReference>
<dbReference type="PANTHER" id="PTHR20881:SF0">
    <property type="entry name" value="3-METHYL-2-OXOBUTANOATE HYDROXYMETHYLTRANSFERASE"/>
    <property type="match status" value="1"/>
</dbReference>
<dbReference type="Pfam" id="PF02548">
    <property type="entry name" value="Pantoate_transf"/>
    <property type="match status" value="1"/>
</dbReference>
<dbReference type="PIRSF" id="PIRSF000388">
    <property type="entry name" value="Pantoate_hydroxy_MeTrfase"/>
    <property type="match status" value="1"/>
</dbReference>
<dbReference type="SUPFAM" id="SSF51621">
    <property type="entry name" value="Phosphoenolpyruvate/pyruvate domain"/>
    <property type="match status" value="1"/>
</dbReference>
<comment type="catalytic activity">
    <reaction>
        <text>3-methyl-2-oxobutanoate + (6R)-5,10-methylene-5,6,7,8-tetrahydrofolate + H2O = 2-dehydropantoate + (6S)-5,6,7,8-tetrahydrofolate</text>
        <dbReference type="Rhea" id="RHEA:11824"/>
        <dbReference type="ChEBI" id="CHEBI:11561"/>
        <dbReference type="ChEBI" id="CHEBI:11851"/>
        <dbReference type="ChEBI" id="CHEBI:15377"/>
        <dbReference type="ChEBI" id="CHEBI:15636"/>
        <dbReference type="ChEBI" id="CHEBI:57453"/>
        <dbReference type="EC" id="2.1.2.11"/>
    </reaction>
</comment>
<comment type="pathway">
    <text>Cofactor biosynthesis; (R)-pantothenate biosynthesis; (R)-pantoate from 3-methyl-2-oxobutanoate: step 1/2.</text>
</comment>
<comment type="similarity">
    <text evidence="1">Belongs to the PanB family.</text>
</comment>
<organism>
    <name type="scientific">Schizosaccharomyces pombe (strain 972 / ATCC 24843)</name>
    <name type="common">Fission yeast</name>
    <dbReference type="NCBI Taxonomy" id="284812"/>
    <lineage>
        <taxon>Eukaryota</taxon>
        <taxon>Fungi</taxon>
        <taxon>Dikarya</taxon>
        <taxon>Ascomycota</taxon>
        <taxon>Taphrinomycotina</taxon>
        <taxon>Schizosaccharomycetes</taxon>
        <taxon>Schizosaccharomycetales</taxon>
        <taxon>Schizosaccharomycetaceae</taxon>
        <taxon>Schizosaccharomyces</taxon>
    </lineage>
</organism>
<accession>Q09672</accession>
<keyword id="KW-0566">Pantothenate biosynthesis</keyword>
<keyword id="KW-1185">Reference proteome</keyword>
<keyword id="KW-0808">Transferase</keyword>
<feature type="chain" id="PRO_0000184926" description="Probable 3-methyl-2-oxobutanoate hydroxymethyltransferase">
    <location>
        <begin position="1"/>
        <end position="267"/>
    </location>
</feature>
<reference key="1">
    <citation type="journal article" date="2002" name="Nature">
        <title>The genome sequence of Schizosaccharomyces pombe.</title>
        <authorList>
            <person name="Wood V."/>
            <person name="Gwilliam R."/>
            <person name="Rajandream M.A."/>
            <person name="Lyne M.H."/>
            <person name="Lyne R."/>
            <person name="Stewart A."/>
            <person name="Sgouros J.G."/>
            <person name="Peat N."/>
            <person name="Hayles J."/>
            <person name="Baker S.G."/>
            <person name="Basham D."/>
            <person name="Bowman S."/>
            <person name="Brooks K."/>
            <person name="Brown D."/>
            <person name="Brown S."/>
            <person name="Chillingworth T."/>
            <person name="Churcher C.M."/>
            <person name="Collins M."/>
            <person name="Connor R."/>
            <person name="Cronin A."/>
            <person name="Davis P."/>
            <person name="Feltwell T."/>
            <person name="Fraser A."/>
            <person name="Gentles S."/>
            <person name="Goble A."/>
            <person name="Hamlin N."/>
            <person name="Harris D.E."/>
            <person name="Hidalgo J."/>
            <person name="Hodgson G."/>
            <person name="Holroyd S."/>
            <person name="Hornsby T."/>
            <person name="Howarth S."/>
            <person name="Huckle E.J."/>
            <person name="Hunt S."/>
            <person name="Jagels K."/>
            <person name="James K.D."/>
            <person name="Jones L."/>
            <person name="Jones M."/>
            <person name="Leather S."/>
            <person name="McDonald S."/>
            <person name="McLean J."/>
            <person name="Mooney P."/>
            <person name="Moule S."/>
            <person name="Mungall K.L."/>
            <person name="Murphy L.D."/>
            <person name="Niblett D."/>
            <person name="Odell C."/>
            <person name="Oliver K."/>
            <person name="O'Neil S."/>
            <person name="Pearson D."/>
            <person name="Quail M.A."/>
            <person name="Rabbinowitsch E."/>
            <person name="Rutherford K.M."/>
            <person name="Rutter S."/>
            <person name="Saunders D."/>
            <person name="Seeger K."/>
            <person name="Sharp S."/>
            <person name="Skelton J."/>
            <person name="Simmonds M.N."/>
            <person name="Squares R."/>
            <person name="Squares S."/>
            <person name="Stevens K."/>
            <person name="Taylor K."/>
            <person name="Taylor R.G."/>
            <person name="Tivey A."/>
            <person name="Walsh S.V."/>
            <person name="Warren T."/>
            <person name="Whitehead S."/>
            <person name="Woodward J.R."/>
            <person name="Volckaert G."/>
            <person name="Aert R."/>
            <person name="Robben J."/>
            <person name="Grymonprez B."/>
            <person name="Weltjens I."/>
            <person name="Vanstreels E."/>
            <person name="Rieger M."/>
            <person name="Schaefer M."/>
            <person name="Mueller-Auer S."/>
            <person name="Gabel C."/>
            <person name="Fuchs M."/>
            <person name="Duesterhoeft A."/>
            <person name="Fritzc C."/>
            <person name="Holzer E."/>
            <person name="Moestl D."/>
            <person name="Hilbert H."/>
            <person name="Borzym K."/>
            <person name="Langer I."/>
            <person name="Beck A."/>
            <person name="Lehrach H."/>
            <person name="Reinhardt R."/>
            <person name="Pohl T.M."/>
            <person name="Eger P."/>
            <person name="Zimmermann W."/>
            <person name="Wedler H."/>
            <person name="Wambutt R."/>
            <person name="Purnelle B."/>
            <person name="Goffeau A."/>
            <person name="Cadieu E."/>
            <person name="Dreano S."/>
            <person name="Gloux S."/>
            <person name="Lelaure V."/>
            <person name="Mottier S."/>
            <person name="Galibert F."/>
            <person name="Aves S.J."/>
            <person name="Xiang Z."/>
            <person name="Hunt C."/>
            <person name="Moore K."/>
            <person name="Hurst S.M."/>
            <person name="Lucas M."/>
            <person name="Rochet M."/>
            <person name="Gaillardin C."/>
            <person name="Tallada V.A."/>
            <person name="Garzon A."/>
            <person name="Thode G."/>
            <person name="Daga R.R."/>
            <person name="Cruzado L."/>
            <person name="Jimenez J."/>
            <person name="Sanchez M."/>
            <person name="del Rey F."/>
            <person name="Benito J."/>
            <person name="Dominguez A."/>
            <person name="Revuelta J.L."/>
            <person name="Moreno S."/>
            <person name="Armstrong J."/>
            <person name="Forsburg S.L."/>
            <person name="Cerutti L."/>
            <person name="Lowe T."/>
            <person name="McCombie W.R."/>
            <person name="Paulsen I."/>
            <person name="Potashkin J."/>
            <person name="Shpakovski G.V."/>
            <person name="Ussery D."/>
            <person name="Barrell B.G."/>
            <person name="Nurse P."/>
        </authorList>
    </citation>
    <scope>NUCLEOTIDE SEQUENCE [LARGE SCALE GENOMIC DNA]</scope>
    <source>
        <strain>972 / ATCC 24843</strain>
    </source>
</reference>